<comment type="function">
    <text evidence="1">Na(+)/H(+) antiporter that extrudes sodium in exchange for external protons.</text>
</comment>
<comment type="catalytic activity">
    <reaction evidence="1">
        <text>Na(+)(in) + 2 H(+)(out) = Na(+)(out) + 2 H(+)(in)</text>
        <dbReference type="Rhea" id="RHEA:29251"/>
        <dbReference type="ChEBI" id="CHEBI:15378"/>
        <dbReference type="ChEBI" id="CHEBI:29101"/>
    </reaction>
    <physiologicalReaction direction="left-to-right" evidence="1">
        <dbReference type="Rhea" id="RHEA:29252"/>
    </physiologicalReaction>
</comment>
<comment type="subcellular location">
    <subcellularLocation>
        <location evidence="1">Cell membrane</location>
        <topology evidence="1">Multi-pass membrane protein</topology>
    </subcellularLocation>
</comment>
<comment type="similarity">
    <text evidence="1">Belongs to the NhaA Na(+)/H(+) (TC 2.A.33) antiporter family.</text>
</comment>
<organism>
    <name type="scientific">Streptomyces coelicolor (strain ATCC BAA-471 / A3(2) / M145)</name>
    <dbReference type="NCBI Taxonomy" id="100226"/>
    <lineage>
        <taxon>Bacteria</taxon>
        <taxon>Bacillati</taxon>
        <taxon>Actinomycetota</taxon>
        <taxon>Actinomycetes</taxon>
        <taxon>Kitasatosporales</taxon>
        <taxon>Streptomycetaceae</taxon>
        <taxon>Streptomyces</taxon>
        <taxon>Streptomyces albidoflavus group</taxon>
    </lineage>
</organism>
<reference key="1">
    <citation type="journal article" date="2002" name="Nature">
        <title>Complete genome sequence of the model actinomycete Streptomyces coelicolor A3(2).</title>
        <authorList>
            <person name="Bentley S.D."/>
            <person name="Chater K.F."/>
            <person name="Cerdeno-Tarraga A.-M."/>
            <person name="Challis G.L."/>
            <person name="Thomson N.R."/>
            <person name="James K.D."/>
            <person name="Harris D.E."/>
            <person name="Quail M.A."/>
            <person name="Kieser H."/>
            <person name="Harper D."/>
            <person name="Bateman A."/>
            <person name="Brown S."/>
            <person name="Chandra G."/>
            <person name="Chen C.W."/>
            <person name="Collins M."/>
            <person name="Cronin A."/>
            <person name="Fraser A."/>
            <person name="Goble A."/>
            <person name="Hidalgo J."/>
            <person name="Hornsby T."/>
            <person name="Howarth S."/>
            <person name="Huang C.-H."/>
            <person name="Kieser T."/>
            <person name="Larke L."/>
            <person name="Murphy L.D."/>
            <person name="Oliver K."/>
            <person name="O'Neil S."/>
            <person name="Rabbinowitsch E."/>
            <person name="Rajandream M.A."/>
            <person name="Rutherford K.M."/>
            <person name="Rutter S."/>
            <person name="Seeger K."/>
            <person name="Saunders D."/>
            <person name="Sharp S."/>
            <person name="Squares R."/>
            <person name="Squares S."/>
            <person name="Taylor K."/>
            <person name="Warren T."/>
            <person name="Wietzorrek A."/>
            <person name="Woodward J.R."/>
            <person name="Barrell B.G."/>
            <person name="Parkhill J."/>
            <person name="Hopwood D.A."/>
        </authorList>
    </citation>
    <scope>NUCLEOTIDE SEQUENCE [LARGE SCALE GENOMIC DNA]</scope>
    <source>
        <strain>ATCC BAA-471 / A3(2) / M145</strain>
    </source>
</reference>
<gene>
    <name evidence="1" type="primary">nhaA3</name>
    <name type="ordered locus">SCO3564</name>
    <name type="ORF">SCH5.27</name>
</gene>
<feature type="chain" id="PRO_0000334448" description="Na(+)/H(+) antiporter NhaA 3">
    <location>
        <begin position="1"/>
        <end position="474"/>
    </location>
</feature>
<feature type="transmembrane region" description="Helical" evidence="1">
    <location>
        <begin position="31"/>
        <end position="51"/>
    </location>
</feature>
<feature type="transmembrane region" description="Helical" evidence="1">
    <location>
        <begin position="73"/>
        <end position="93"/>
    </location>
</feature>
<feature type="transmembrane region" description="Helical" evidence="1">
    <location>
        <begin position="110"/>
        <end position="130"/>
    </location>
</feature>
<feature type="transmembrane region" description="Helical" evidence="1">
    <location>
        <begin position="141"/>
        <end position="161"/>
    </location>
</feature>
<feature type="transmembrane region" description="Helical" evidence="1">
    <location>
        <begin position="171"/>
        <end position="191"/>
    </location>
</feature>
<feature type="transmembrane region" description="Helical" evidence="1">
    <location>
        <begin position="194"/>
        <end position="214"/>
    </location>
</feature>
<feature type="transmembrane region" description="Helical" evidence="1">
    <location>
        <begin position="220"/>
        <end position="240"/>
    </location>
</feature>
<feature type="transmembrane region" description="Helical" evidence="1">
    <location>
        <begin position="280"/>
        <end position="300"/>
    </location>
</feature>
<feature type="transmembrane region" description="Helical" evidence="1">
    <location>
        <begin position="309"/>
        <end position="329"/>
    </location>
</feature>
<feature type="transmembrane region" description="Helical" evidence="1">
    <location>
        <begin position="347"/>
        <end position="367"/>
    </location>
</feature>
<feature type="transmembrane region" description="Helical" evidence="1">
    <location>
        <begin position="378"/>
        <end position="398"/>
    </location>
</feature>
<name>NHAA3_STRCO</name>
<accession>Q9X929</accession>
<proteinExistence type="inferred from homology"/>
<dbReference type="EMBL" id="AL939117">
    <property type="protein sequence ID" value="CAB38501.1"/>
    <property type="molecule type" value="Genomic_DNA"/>
</dbReference>
<dbReference type="PIR" id="T36685">
    <property type="entry name" value="T36685"/>
</dbReference>
<dbReference type="RefSeq" id="NP_627762.1">
    <property type="nucleotide sequence ID" value="NC_003888.3"/>
</dbReference>
<dbReference type="SMR" id="Q9X929"/>
<dbReference type="STRING" id="100226.gene:17761186"/>
<dbReference type="PaxDb" id="100226-SCO3564"/>
<dbReference type="KEGG" id="sco:SCO3564"/>
<dbReference type="PATRIC" id="fig|100226.15.peg.3620"/>
<dbReference type="eggNOG" id="COG3004">
    <property type="taxonomic scope" value="Bacteria"/>
</dbReference>
<dbReference type="HOGENOM" id="CLU_015803_0_0_11"/>
<dbReference type="InParanoid" id="Q9X929"/>
<dbReference type="OrthoDB" id="117402at2"/>
<dbReference type="PhylomeDB" id="Q9X929"/>
<dbReference type="Proteomes" id="UP000001973">
    <property type="component" value="Chromosome"/>
</dbReference>
<dbReference type="GO" id="GO:0005886">
    <property type="term" value="C:plasma membrane"/>
    <property type="evidence" value="ECO:0000318"/>
    <property type="project" value="GO_Central"/>
</dbReference>
<dbReference type="GO" id="GO:0015385">
    <property type="term" value="F:sodium:proton antiporter activity"/>
    <property type="evidence" value="ECO:0000318"/>
    <property type="project" value="GO_Central"/>
</dbReference>
<dbReference type="GO" id="GO:0006885">
    <property type="term" value="P:regulation of pH"/>
    <property type="evidence" value="ECO:0007669"/>
    <property type="project" value="InterPro"/>
</dbReference>
<dbReference type="Gene3D" id="1.20.1530.10">
    <property type="entry name" value="Na+/H+ antiporter like domain"/>
    <property type="match status" value="1"/>
</dbReference>
<dbReference type="HAMAP" id="MF_01844">
    <property type="entry name" value="NhaA"/>
    <property type="match status" value="1"/>
</dbReference>
<dbReference type="InterPro" id="IPR023171">
    <property type="entry name" value="Na/H_antiporter_dom_sf"/>
</dbReference>
<dbReference type="InterPro" id="IPR004670">
    <property type="entry name" value="NhaA"/>
</dbReference>
<dbReference type="NCBIfam" id="TIGR00773">
    <property type="entry name" value="NhaA"/>
    <property type="match status" value="1"/>
</dbReference>
<dbReference type="PANTHER" id="PTHR30341:SF0">
    <property type="entry name" value="NA(+)_H(+) ANTIPORTER NHAA"/>
    <property type="match status" value="1"/>
</dbReference>
<dbReference type="PANTHER" id="PTHR30341">
    <property type="entry name" value="SODIUM ION/PROTON ANTIPORTER NHAA-RELATED"/>
    <property type="match status" value="1"/>
</dbReference>
<dbReference type="Pfam" id="PF06965">
    <property type="entry name" value="Na_H_antiport_1"/>
    <property type="match status" value="1"/>
</dbReference>
<sequence length="474" mass="49724">MTAPRTPRKAFGRLSLPERTYLADALRTETVGGVLLLVAAIAALVWANIPALHDSYESVSHFHFGPAALGLNLSVAHWAADGLLAIFFFVAGIELKRELVAGDLKDPKAAALPVVAALCGMVVPAVVYTVTSTAGGGSLSGWAVPTATDIAFALAVLAVIGTSLPSALRAFLLTLAVVDDLFAILIIAVFFTETLNFAALGGAVVGLAVFWLLLRKGVRGWYVYVPLGLVIWALMYNSGVHATIAGVAMGLMLRCHRREGEDHSPGEHIEHLVRPLSAGLAVPLFALFSAGVAITGGALADVFTKPETLGVVLGLVVGKTLGIFGGTWLTSRFTRASLSDDLQWADVFAVATLAGIGFTVSLLIGELAFEDDAAMTSEVKAAVLTGSLIAAALATVLLKIRNAKYRGMVAEEERDDDLSGVPDIYEEDDPAYHLRVAAIYEKKAAEHRRIAEEMESARLAEVAGGAGDEGDGPA</sequence>
<evidence type="ECO:0000255" key="1">
    <source>
        <dbReference type="HAMAP-Rule" id="MF_01844"/>
    </source>
</evidence>
<protein>
    <recommendedName>
        <fullName evidence="1">Na(+)/H(+) antiporter NhaA 3</fullName>
    </recommendedName>
    <alternativeName>
        <fullName evidence="1">Sodium/proton antiporter NhaA 3</fullName>
    </alternativeName>
</protein>
<keyword id="KW-0050">Antiport</keyword>
<keyword id="KW-1003">Cell membrane</keyword>
<keyword id="KW-0406">Ion transport</keyword>
<keyword id="KW-0472">Membrane</keyword>
<keyword id="KW-1185">Reference proteome</keyword>
<keyword id="KW-0915">Sodium</keyword>
<keyword id="KW-0739">Sodium transport</keyword>
<keyword id="KW-0812">Transmembrane</keyword>
<keyword id="KW-1133">Transmembrane helix</keyword>
<keyword id="KW-0813">Transport</keyword>